<name>RL5_BURMA</name>
<proteinExistence type="inferred from homology"/>
<protein>
    <recommendedName>
        <fullName evidence="1">Large ribosomal subunit protein uL5</fullName>
    </recommendedName>
    <alternativeName>
        <fullName evidence="2">50S ribosomal protein L5</fullName>
    </alternativeName>
</protein>
<accession>Q62GL7</accession>
<comment type="function">
    <text evidence="1">This is one of the proteins that bind and probably mediate the attachment of the 5S RNA into the large ribosomal subunit, where it forms part of the central protuberance. In the 70S ribosome it contacts protein S13 of the 30S subunit (bridge B1b), connecting the 2 subunits; this bridge is implicated in subunit movement. Contacts the P site tRNA; the 5S rRNA and some of its associated proteins might help stabilize positioning of ribosome-bound tRNAs.</text>
</comment>
<comment type="subunit">
    <text evidence="1">Part of the 50S ribosomal subunit; part of the 5S rRNA/L5/L18/L25 subcomplex. Contacts the 5S rRNA and the P site tRNA. Forms a bridge to the 30S subunit in the 70S ribosome.</text>
</comment>
<comment type="similarity">
    <text evidence="1">Belongs to the universal ribosomal protein uL5 family.</text>
</comment>
<sequence length="179" mass="20058">MARFQEFYKEKVVPGLIEKFGYKSVMEVPRITKITLNMGLGEAVADKKIIENAVGDLTKIAGQKPVVTKARKAIAGFKIRQGYPIGAMVTLRGRAMYEFLDRFVTVALPRVRDFRGVSGRAFDGRGNYNIGVKEQIIFPEIDYDKIDALRGLNISIMTTAKTDDEAKALLASFKFPFRN</sequence>
<keyword id="KW-1185">Reference proteome</keyword>
<keyword id="KW-0687">Ribonucleoprotein</keyword>
<keyword id="KW-0689">Ribosomal protein</keyword>
<keyword id="KW-0694">RNA-binding</keyword>
<keyword id="KW-0699">rRNA-binding</keyword>
<keyword id="KW-0820">tRNA-binding</keyword>
<organism>
    <name type="scientific">Burkholderia mallei (strain ATCC 23344)</name>
    <dbReference type="NCBI Taxonomy" id="243160"/>
    <lineage>
        <taxon>Bacteria</taxon>
        <taxon>Pseudomonadati</taxon>
        <taxon>Pseudomonadota</taxon>
        <taxon>Betaproteobacteria</taxon>
        <taxon>Burkholderiales</taxon>
        <taxon>Burkholderiaceae</taxon>
        <taxon>Burkholderia</taxon>
        <taxon>pseudomallei group</taxon>
    </lineage>
</organism>
<reference key="1">
    <citation type="journal article" date="2004" name="Proc. Natl. Acad. Sci. U.S.A.">
        <title>Structural flexibility in the Burkholderia mallei genome.</title>
        <authorList>
            <person name="Nierman W.C."/>
            <person name="DeShazer D."/>
            <person name="Kim H.S."/>
            <person name="Tettelin H."/>
            <person name="Nelson K.E."/>
            <person name="Feldblyum T.V."/>
            <person name="Ulrich R.L."/>
            <person name="Ronning C.M."/>
            <person name="Brinkac L.M."/>
            <person name="Daugherty S.C."/>
            <person name="Davidsen T.D."/>
            <person name="DeBoy R.T."/>
            <person name="Dimitrov G."/>
            <person name="Dodson R.J."/>
            <person name="Durkin A.S."/>
            <person name="Gwinn M.L."/>
            <person name="Haft D.H."/>
            <person name="Khouri H.M."/>
            <person name="Kolonay J.F."/>
            <person name="Madupu R."/>
            <person name="Mohammoud Y."/>
            <person name="Nelson W.C."/>
            <person name="Radune D."/>
            <person name="Romero C.M."/>
            <person name="Sarria S."/>
            <person name="Selengut J."/>
            <person name="Shamblin C."/>
            <person name="Sullivan S.A."/>
            <person name="White O."/>
            <person name="Yu Y."/>
            <person name="Zafar N."/>
            <person name="Zhou L."/>
            <person name="Fraser C.M."/>
        </authorList>
    </citation>
    <scope>NUCLEOTIDE SEQUENCE [LARGE SCALE GENOMIC DNA]</scope>
    <source>
        <strain>ATCC 23344</strain>
    </source>
</reference>
<gene>
    <name evidence="1" type="primary">rplE</name>
    <name type="ordered locus">BMA2620</name>
</gene>
<evidence type="ECO:0000255" key="1">
    <source>
        <dbReference type="HAMAP-Rule" id="MF_01333"/>
    </source>
</evidence>
<evidence type="ECO:0000305" key="2"/>
<feature type="chain" id="PRO_0000242978" description="Large ribosomal subunit protein uL5">
    <location>
        <begin position="1"/>
        <end position="179"/>
    </location>
</feature>
<dbReference type="EMBL" id="CP000010">
    <property type="protein sequence ID" value="AAU47858.1"/>
    <property type="molecule type" value="Genomic_DNA"/>
</dbReference>
<dbReference type="RefSeq" id="WP_004197949.1">
    <property type="nucleotide sequence ID" value="NC_006348.1"/>
</dbReference>
<dbReference type="RefSeq" id="YP_104154.1">
    <property type="nucleotide sequence ID" value="NC_006348.1"/>
</dbReference>
<dbReference type="SMR" id="Q62GL7"/>
<dbReference type="GeneID" id="92980307"/>
<dbReference type="KEGG" id="bma:BMA2620"/>
<dbReference type="PATRIC" id="fig|243160.12.peg.2691"/>
<dbReference type="eggNOG" id="COG0094">
    <property type="taxonomic scope" value="Bacteria"/>
</dbReference>
<dbReference type="HOGENOM" id="CLU_061015_2_1_4"/>
<dbReference type="Proteomes" id="UP000006693">
    <property type="component" value="Chromosome 1"/>
</dbReference>
<dbReference type="GO" id="GO:1990904">
    <property type="term" value="C:ribonucleoprotein complex"/>
    <property type="evidence" value="ECO:0007669"/>
    <property type="project" value="UniProtKB-KW"/>
</dbReference>
<dbReference type="GO" id="GO:0005840">
    <property type="term" value="C:ribosome"/>
    <property type="evidence" value="ECO:0007669"/>
    <property type="project" value="UniProtKB-KW"/>
</dbReference>
<dbReference type="GO" id="GO:0019843">
    <property type="term" value="F:rRNA binding"/>
    <property type="evidence" value="ECO:0007669"/>
    <property type="project" value="UniProtKB-UniRule"/>
</dbReference>
<dbReference type="GO" id="GO:0003735">
    <property type="term" value="F:structural constituent of ribosome"/>
    <property type="evidence" value="ECO:0007669"/>
    <property type="project" value="InterPro"/>
</dbReference>
<dbReference type="GO" id="GO:0000049">
    <property type="term" value="F:tRNA binding"/>
    <property type="evidence" value="ECO:0007669"/>
    <property type="project" value="UniProtKB-UniRule"/>
</dbReference>
<dbReference type="GO" id="GO:0006412">
    <property type="term" value="P:translation"/>
    <property type="evidence" value="ECO:0007669"/>
    <property type="project" value="UniProtKB-UniRule"/>
</dbReference>
<dbReference type="FunFam" id="3.30.1440.10:FF:000001">
    <property type="entry name" value="50S ribosomal protein L5"/>
    <property type="match status" value="1"/>
</dbReference>
<dbReference type="Gene3D" id="3.30.1440.10">
    <property type="match status" value="1"/>
</dbReference>
<dbReference type="HAMAP" id="MF_01333_B">
    <property type="entry name" value="Ribosomal_uL5_B"/>
    <property type="match status" value="1"/>
</dbReference>
<dbReference type="InterPro" id="IPR002132">
    <property type="entry name" value="Ribosomal_uL5"/>
</dbReference>
<dbReference type="InterPro" id="IPR020930">
    <property type="entry name" value="Ribosomal_uL5_bac-type"/>
</dbReference>
<dbReference type="InterPro" id="IPR031309">
    <property type="entry name" value="Ribosomal_uL5_C"/>
</dbReference>
<dbReference type="InterPro" id="IPR020929">
    <property type="entry name" value="Ribosomal_uL5_CS"/>
</dbReference>
<dbReference type="InterPro" id="IPR022803">
    <property type="entry name" value="Ribosomal_uL5_dom_sf"/>
</dbReference>
<dbReference type="InterPro" id="IPR031310">
    <property type="entry name" value="Ribosomal_uL5_N"/>
</dbReference>
<dbReference type="NCBIfam" id="NF000585">
    <property type="entry name" value="PRK00010.1"/>
    <property type="match status" value="1"/>
</dbReference>
<dbReference type="PANTHER" id="PTHR11994">
    <property type="entry name" value="60S RIBOSOMAL PROTEIN L11-RELATED"/>
    <property type="match status" value="1"/>
</dbReference>
<dbReference type="Pfam" id="PF00281">
    <property type="entry name" value="Ribosomal_L5"/>
    <property type="match status" value="1"/>
</dbReference>
<dbReference type="Pfam" id="PF00673">
    <property type="entry name" value="Ribosomal_L5_C"/>
    <property type="match status" value="1"/>
</dbReference>
<dbReference type="PIRSF" id="PIRSF002161">
    <property type="entry name" value="Ribosomal_L5"/>
    <property type="match status" value="1"/>
</dbReference>
<dbReference type="SUPFAM" id="SSF55282">
    <property type="entry name" value="RL5-like"/>
    <property type="match status" value="1"/>
</dbReference>
<dbReference type="PROSITE" id="PS00358">
    <property type="entry name" value="RIBOSOMAL_L5"/>
    <property type="match status" value="1"/>
</dbReference>